<dbReference type="EC" id="2.1.1.45" evidence="1"/>
<dbReference type="EMBL" id="AM040264">
    <property type="protein sequence ID" value="CAJ11374.1"/>
    <property type="molecule type" value="Genomic_DNA"/>
</dbReference>
<dbReference type="RefSeq" id="WP_002964508.1">
    <property type="nucleotide sequence ID" value="NZ_KN046823.1"/>
</dbReference>
<dbReference type="SMR" id="Q2YS22"/>
<dbReference type="STRING" id="359391.BAB1_1418"/>
<dbReference type="KEGG" id="bmf:BAB1_1418"/>
<dbReference type="PATRIC" id="fig|359391.11.peg.868"/>
<dbReference type="HOGENOM" id="CLU_021669_0_0_5"/>
<dbReference type="PhylomeDB" id="Q2YS22"/>
<dbReference type="UniPathway" id="UPA00575"/>
<dbReference type="Proteomes" id="UP000002719">
    <property type="component" value="Chromosome I"/>
</dbReference>
<dbReference type="GO" id="GO:0005829">
    <property type="term" value="C:cytosol"/>
    <property type="evidence" value="ECO:0007669"/>
    <property type="project" value="TreeGrafter"/>
</dbReference>
<dbReference type="GO" id="GO:0004799">
    <property type="term" value="F:thymidylate synthase activity"/>
    <property type="evidence" value="ECO:0007669"/>
    <property type="project" value="UniProtKB-UniRule"/>
</dbReference>
<dbReference type="GO" id="GO:0006231">
    <property type="term" value="P:dTMP biosynthetic process"/>
    <property type="evidence" value="ECO:0007669"/>
    <property type="project" value="UniProtKB-UniRule"/>
</dbReference>
<dbReference type="GO" id="GO:0006235">
    <property type="term" value="P:dTTP biosynthetic process"/>
    <property type="evidence" value="ECO:0007669"/>
    <property type="project" value="UniProtKB-UniRule"/>
</dbReference>
<dbReference type="GO" id="GO:0032259">
    <property type="term" value="P:methylation"/>
    <property type="evidence" value="ECO:0007669"/>
    <property type="project" value="UniProtKB-KW"/>
</dbReference>
<dbReference type="CDD" id="cd00351">
    <property type="entry name" value="TS_Pyrimidine_HMase"/>
    <property type="match status" value="1"/>
</dbReference>
<dbReference type="FunFam" id="3.30.572.10:FF:000001">
    <property type="entry name" value="Thymidylate synthase"/>
    <property type="match status" value="1"/>
</dbReference>
<dbReference type="Gene3D" id="3.30.572.10">
    <property type="entry name" value="Thymidylate synthase/dCMP hydroxymethylase domain"/>
    <property type="match status" value="1"/>
</dbReference>
<dbReference type="HAMAP" id="MF_00008">
    <property type="entry name" value="Thymidy_synth_bact"/>
    <property type="match status" value="1"/>
</dbReference>
<dbReference type="InterPro" id="IPR045097">
    <property type="entry name" value="Thymidate_synth/dCMP_Mease"/>
</dbReference>
<dbReference type="InterPro" id="IPR023451">
    <property type="entry name" value="Thymidate_synth/dCMP_Mease_dom"/>
</dbReference>
<dbReference type="InterPro" id="IPR036926">
    <property type="entry name" value="Thymidate_synth/dCMP_Mease_sf"/>
</dbReference>
<dbReference type="InterPro" id="IPR000398">
    <property type="entry name" value="Thymidylate_synthase"/>
</dbReference>
<dbReference type="InterPro" id="IPR020940">
    <property type="entry name" value="Thymidylate_synthase_AS"/>
</dbReference>
<dbReference type="NCBIfam" id="NF002497">
    <property type="entry name" value="PRK01827.1-3"/>
    <property type="match status" value="1"/>
</dbReference>
<dbReference type="NCBIfam" id="NF002499">
    <property type="entry name" value="PRK01827.1-5"/>
    <property type="match status" value="1"/>
</dbReference>
<dbReference type="NCBIfam" id="TIGR03284">
    <property type="entry name" value="thym_sym"/>
    <property type="match status" value="2"/>
</dbReference>
<dbReference type="PANTHER" id="PTHR11548:SF9">
    <property type="entry name" value="THYMIDYLATE SYNTHASE"/>
    <property type="match status" value="1"/>
</dbReference>
<dbReference type="PANTHER" id="PTHR11548">
    <property type="entry name" value="THYMIDYLATE SYNTHASE 1"/>
    <property type="match status" value="1"/>
</dbReference>
<dbReference type="Pfam" id="PF00303">
    <property type="entry name" value="Thymidylat_synt"/>
    <property type="match status" value="1"/>
</dbReference>
<dbReference type="PRINTS" id="PR00108">
    <property type="entry name" value="THYMDSNTHASE"/>
</dbReference>
<dbReference type="SUPFAM" id="SSF55831">
    <property type="entry name" value="Thymidylate synthase/dCMP hydroxymethylase"/>
    <property type="match status" value="1"/>
</dbReference>
<dbReference type="PROSITE" id="PS00091">
    <property type="entry name" value="THYMIDYLATE_SYNTHASE"/>
    <property type="match status" value="1"/>
</dbReference>
<evidence type="ECO:0000255" key="1">
    <source>
        <dbReference type="HAMAP-Rule" id="MF_00008"/>
    </source>
</evidence>
<comment type="function">
    <text evidence="1">Catalyzes the reductive methylation of 2'-deoxyuridine-5'-monophosphate (dUMP) to 2'-deoxythymidine-5'-monophosphate (dTMP) while utilizing 5,10-methylenetetrahydrofolate (mTHF) as the methyl donor and reductant in the reaction, yielding dihydrofolate (DHF) as a by-product. This enzymatic reaction provides an intracellular de novo source of dTMP, an essential precursor for DNA biosynthesis.</text>
</comment>
<comment type="catalytic activity">
    <reaction evidence="1">
        <text>dUMP + (6R)-5,10-methylene-5,6,7,8-tetrahydrofolate = 7,8-dihydrofolate + dTMP</text>
        <dbReference type="Rhea" id="RHEA:12104"/>
        <dbReference type="ChEBI" id="CHEBI:15636"/>
        <dbReference type="ChEBI" id="CHEBI:57451"/>
        <dbReference type="ChEBI" id="CHEBI:63528"/>
        <dbReference type="ChEBI" id="CHEBI:246422"/>
        <dbReference type="EC" id="2.1.1.45"/>
    </reaction>
</comment>
<comment type="pathway">
    <text evidence="1">Pyrimidine metabolism; dTTP biosynthesis.</text>
</comment>
<comment type="subunit">
    <text evidence="1">Homodimer.</text>
</comment>
<comment type="subcellular location">
    <subcellularLocation>
        <location evidence="1">Cytoplasm</location>
    </subcellularLocation>
</comment>
<comment type="similarity">
    <text evidence="1">Belongs to the thymidylate synthase family. Bacterial-type ThyA subfamily.</text>
</comment>
<sequence length="264" mass="30330">MRTYLDLLQHVLDHGVDRDDRTGTGTRSVFGYQMRFDLEEGFPVLTTKKLHLRSIIHELLWFLKGDTNIAYLKENGVTIWDEWADENGDLGPVYGYQWRSWPAPDGRHIDQIANLLKMLHTNPQSRRLIVSAWNPALVDEMALPPCHCLFQFYVANGRLSCQLYQRSADIFLGVPFNIASYALLTMMIAQVTGLKPGEFIHTLGDAHIYSNHFEQARLQLTRTPKKLPVMHINPDVKDLFAFRFEDFRLDGYEADPTIKAPIAV</sequence>
<protein>
    <recommendedName>
        <fullName evidence="1">Thymidylate synthase</fullName>
        <shortName evidence="1">TS</shortName>
        <shortName evidence="1">TSase</shortName>
        <ecNumber evidence="1">2.1.1.45</ecNumber>
    </recommendedName>
</protein>
<gene>
    <name evidence="1" type="primary">thyA</name>
    <name type="ordered locus">BAB1_1418</name>
</gene>
<proteinExistence type="inferred from homology"/>
<name>TYSY_BRUA2</name>
<organism>
    <name type="scientific">Brucella abortus (strain 2308)</name>
    <dbReference type="NCBI Taxonomy" id="359391"/>
    <lineage>
        <taxon>Bacteria</taxon>
        <taxon>Pseudomonadati</taxon>
        <taxon>Pseudomonadota</taxon>
        <taxon>Alphaproteobacteria</taxon>
        <taxon>Hyphomicrobiales</taxon>
        <taxon>Brucellaceae</taxon>
        <taxon>Brucella/Ochrobactrum group</taxon>
        <taxon>Brucella</taxon>
    </lineage>
</organism>
<feature type="chain" id="PRO_1000000583" description="Thymidylate synthase">
    <location>
        <begin position="1"/>
        <end position="264"/>
    </location>
</feature>
<feature type="active site" description="Nucleophile" evidence="1">
    <location>
        <position position="146"/>
    </location>
</feature>
<feature type="binding site" description="in other chain" evidence="1">
    <location>
        <position position="21"/>
    </location>
    <ligand>
        <name>dUMP</name>
        <dbReference type="ChEBI" id="CHEBI:246422"/>
        <note>ligand shared between dimeric partners</note>
    </ligand>
</feature>
<feature type="binding site" evidence="1">
    <location>
        <position position="51"/>
    </location>
    <ligand>
        <name>(6R)-5,10-methylene-5,6,7,8-tetrahydrofolate</name>
        <dbReference type="ChEBI" id="CHEBI:15636"/>
    </ligand>
</feature>
<feature type="binding site" evidence="1">
    <location>
        <begin position="126"/>
        <end position="127"/>
    </location>
    <ligand>
        <name>dUMP</name>
        <dbReference type="ChEBI" id="CHEBI:246422"/>
        <note>ligand shared between dimeric partners</note>
    </ligand>
</feature>
<feature type="binding site" description="in other chain" evidence="1">
    <location>
        <begin position="166"/>
        <end position="169"/>
    </location>
    <ligand>
        <name>dUMP</name>
        <dbReference type="ChEBI" id="CHEBI:246422"/>
        <note>ligand shared between dimeric partners</note>
    </ligand>
</feature>
<feature type="binding site" evidence="1">
    <location>
        <position position="169"/>
    </location>
    <ligand>
        <name>(6R)-5,10-methylene-5,6,7,8-tetrahydrofolate</name>
        <dbReference type="ChEBI" id="CHEBI:15636"/>
    </ligand>
</feature>
<feature type="binding site" description="in other chain" evidence="1">
    <location>
        <position position="177"/>
    </location>
    <ligand>
        <name>dUMP</name>
        <dbReference type="ChEBI" id="CHEBI:246422"/>
        <note>ligand shared between dimeric partners</note>
    </ligand>
</feature>
<feature type="binding site" description="in other chain" evidence="1">
    <location>
        <begin position="207"/>
        <end position="209"/>
    </location>
    <ligand>
        <name>dUMP</name>
        <dbReference type="ChEBI" id="CHEBI:246422"/>
        <note>ligand shared between dimeric partners</note>
    </ligand>
</feature>
<feature type="binding site" evidence="1">
    <location>
        <position position="263"/>
    </location>
    <ligand>
        <name>(6R)-5,10-methylene-5,6,7,8-tetrahydrofolate</name>
        <dbReference type="ChEBI" id="CHEBI:15636"/>
    </ligand>
</feature>
<reference key="1">
    <citation type="journal article" date="2005" name="Infect. Immun.">
        <title>Whole-genome analyses of speciation events in pathogenic Brucellae.</title>
        <authorList>
            <person name="Chain P.S."/>
            <person name="Comerci D.J."/>
            <person name="Tolmasky M.E."/>
            <person name="Larimer F.W."/>
            <person name="Malfatti S.A."/>
            <person name="Vergez L.M."/>
            <person name="Aguero F."/>
            <person name="Land M.L."/>
            <person name="Ugalde R.A."/>
            <person name="Garcia E."/>
        </authorList>
    </citation>
    <scope>NUCLEOTIDE SEQUENCE [LARGE SCALE GENOMIC DNA]</scope>
    <source>
        <strain>2308</strain>
    </source>
</reference>
<keyword id="KW-0963">Cytoplasm</keyword>
<keyword id="KW-0489">Methyltransferase</keyword>
<keyword id="KW-0545">Nucleotide biosynthesis</keyword>
<keyword id="KW-1185">Reference proteome</keyword>
<keyword id="KW-0808">Transferase</keyword>
<accession>Q2YS22</accession>